<protein>
    <recommendedName>
        <fullName evidence="1">Iron-sulfur cluster repair protein YtfE</fullName>
    </recommendedName>
</protein>
<gene>
    <name evidence="1" type="primary">ytfE</name>
    <name type="ordered locus">EcSMS35_4688</name>
</gene>
<keyword id="KW-0963">Cytoplasm</keyword>
<keyword id="KW-0408">Iron</keyword>
<keyword id="KW-0479">Metal-binding</keyword>
<keyword id="KW-0346">Stress response</keyword>
<comment type="function">
    <text evidence="1">Di-iron-containing protein involved in the repair of iron-sulfur clusters damaged by oxidative and nitrosative stress conditions.</text>
</comment>
<comment type="subunit">
    <text evidence="1">Homodimer.</text>
</comment>
<comment type="subcellular location">
    <subcellularLocation>
        <location evidence="1">Cytoplasm</location>
    </subcellularLocation>
</comment>
<comment type="similarity">
    <text evidence="1">Belongs to the RIC family. YtfE subfamily.</text>
</comment>
<sequence length="220" mass="24883">MAYRDQPLGELALSIPRASALFRKYDMDYCCGGKQTLARAAARKELDVDVIEAELAKLAEQPIEKDWRSAPLAEIIDHIIVRYHDRHREQLPELILQATKVERVHADKPSVPKGLTKYLTMLHEELSSHMMKEEQILFPMIKQGMGSQAMGPISVMESEHDEAGELLEVIKHTTNNVTPPPEACTTWKAMYNGINELIDDLMEHISLENNVLFPRALAGE</sequence>
<feature type="chain" id="PRO_1000148179" description="Iron-sulfur cluster repair protein YtfE">
    <location>
        <begin position="1"/>
        <end position="220"/>
    </location>
</feature>
<organism>
    <name type="scientific">Escherichia coli (strain SMS-3-5 / SECEC)</name>
    <dbReference type="NCBI Taxonomy" id="439855"/>
    <lineage>
        <taxon>Bacteria</taxon>
        <taxon>Pseudomonadati</taxon>
        <taxon>Pseudomonadota</taxon>
        <taxon>Gammaproteobacteria</taxon>
        <taxon>Enterobacterales</taxon>
        <taxon>Enterobacteriaceae</taxon>
        <taxon>Escherichia</taxon>
    </lineage>
</organism>
<accession>B1LR94</accession>
<reference key="1">
    <citation type="journal article" date="2008" name="J. Bacteriol.">
        <title>Insights into the environmental resistance gene pool from the genome sequence of the multidrug-resistant environmental isolate Escherichia coli SMS-3-5.</title>
        <authorList>
            <person name="Fricke W.F."/>
            <person name="Wright M.S."/>
            <person name="Lindell A.H."/>
            <person name="Harkins D.M."/>
            <person name="Baker-Austin C."/>
            <person name="Ravel J."/>
            <person name="Stepanauskas R."/>
        </authorList>
    </citation>
    <scope>NUCLEOTIDE SEQUENCE [LARGE SCALE GENOMIC DNA]</scope>
    <source>
        <strain>SMS-3-5 / SECEC</strain>
    </source>
</reference>
<proteinExistence type="inferred from homology"/>
<name>YTFE_ECOSM</name>
<dbReference type="EMBL" id="CP000970">
    <property type="protein sequence ID" value="ACB16180.1"/>
    <property type="molecule type" value="Genomic_DNA"/>
</dbReference>
<dbReference type="RefSeq" id="WP_000331451.1">
    <property type="nucleotide sequence ID" value="NC_010498.1"/>
</dbReference>
<dbReference type="SMR" id="B1LR94"/>
<dbReference type="GeneID" id="89519204"/>
<dbReference type="KEGG" id="ecm:EcSMS35_4688"/>
<dbReference type="HOGENOM" id="CLU_076075_2_0_6"/>
<dbReference type="Proteomes" id="UP000007011">
    <property type="component" value="Chromosome"/>
</dbReference>
<dbReference type="GO" id="GO:0005737">
    <property type="term" value="C:cytoplasm"/>
    <property type="evidence" value="ECO:0007669"/>
    <property type="project" value="UniProtKB-SubCell"/>
</dbReference>
<dbReference type="GO" id="GO:0046872">
    <property type="term" value="F:metal ion binding"/>
    <property type="evidence" value="ECO:0007669"/>
    <property type="project" value="UniProtKB-KW"/>
</dbReference>
<dbReference type="GO" id="GO:0030091">
    <property type="term" value="P:protein repair"/>
    <property type="evidence" value="ECO:0007669"/>
    <property type="project" value="UniProtKB-UniRule"/>
</dbReference>
<dbReference type="GO" id="GO:0051409">
    <property type="term" value="P:response to nitrosative stress"/>
    <property type="evidence" value="ECO:0007669"/>
    <property type="project" value="UniProtKB-UniRule"/>
</dbReference>
<dbReference type="GO" id="GO:0006979">
    <property type="term" value="P:response to oxidative stress"/>
    <property type="evidence" value="ECO:0007669"/>
    <property type="project" value="UniProtKB-UniRule"/>
</dbReference>
<dbReference type="CDD" id="cd12108">
    <property type="entry name" value="Hr-like"/>
    <property type="match status" value="1"/>
</dbReference>
<dbReference type="FunFam" id="1.20.120.520:FF:000001">
    <property type="entry name" value="Iron-sulfur cluster repair protein YtfE"/>
    <property type="match status" value="1"/>
</dbReference>
<dbReference type="Gene3D" id="1.20.120.520">
    <property type="entry name" value="nmb1532 protein domain like"/>
    <property type="match status" value="1"/>
</dbReference>
<dbReference type="HAMAP" id="MF_01606">
    <property type="entry name" value="RIC_YtfE"/>
    <property type="match status" value="1"/>
</dbReference>
<dbReference type="InterPro" id="IPR023742">
    <property type="entry name" value="FeS-repair_YftE"/>
</dbReference>
<dbReference type="InterPro" id="IPR012312">
    <property type="entry name" value="Hemerythrin-like"/>
</dbReference>
<dbReference type="InterPro" id="IPR019903">
    <property type="entry name" value="RIC_family"/>
</dbReference>
<dbReference type="NCBIfam" id="TIGR03652">
    <property type="entry name" value="FeS_repair_RIC"/>
    <property type="match status" value="1"/>
</dbReference>
<dbReference type="NCBIfam" id="NF008221">
    <property type="entry name" value="PRK10992.1"/>
    <property type="match status" value="1"/>
</dbReference>
<dbReference type="PANTHER" id="PTHR36438">
    <property type="entry name" value="IRON-SULFUR CLUSTER REPAIR PROTEIN YTFE"/>
    <property type="match status" value="1"/>
</dbReference>
<dbReference type="PANTHER" id="PTHR36438:SF1">
    <property type="entry name" value="IRON-SULFUR CLUSTER REPAIR PROTEIN YTFE"/>
    <property type="match status" value="1"/>
</dbReference>
<dbReference type="Pfam" id="PF01814">
    <property type="entry name" value="Hemerythrin"/>
    <property type="match status" value="1"/>
</dbReference>
<dbReference type="Pfam" id="PF04405">
    <property type="entry name" value="ScdA_N"/>
    <property type="match status" value="1"/>
</dbReference>
<evidence type="ECO:0000255" key="1">
    <source>
        <dbReference type="HAMAP-Rule" id="MF_01606"/>
    </source>
</evidence>